<feature type="chain" id="PRO_0000152472" description="Imidazole glycerol phosphate synthase subunit hisH">
    <location>
        <begin position="1"/>
        <end position="206"/>
    </location>
</feature>
<feature type="domain" description="Glutamine amidotransferase type-1" evidence="2">
    <location>
        <begin position="2"/>
        <end position="206"/>
    </location>
</feature>
<feature type="active site" description="Nucleophile" evidence="2">
    <location>
        <position position="80"/>
    </location>
</feature>
<feature type="active site" evidence="2">
    <location>
        <position position="184"/>
    </location>
</feature>
<feature type="active site" evidence="2">
    <location>
        <position position="186"/>
    </location>
</feature>
<reference key="1">
    <citation type="journal article" date="2003" name="DNA Res.">
        <title>Complete sequence and analysis of the plastid genome of the unicellular red alga Cyanidioschyzon merolae.</title>
        <authorList>
            <person name="Ohta N."/>
            <person name="Matsuzaki M."/>
            <person name="Misumi O."/>
            <person name="Miyagishima S.-Y."/>
            <person name="Nozaki H."/>
            <person name="Tanaka K."/>
            <person name="Shin-i T."/>
            <person name="Kohara Y."/>
            <person name="Kuroiwa T."/>
        </authorList>
    </citation>
    <scope>NUCLEOTIDE SEQUENCE [LARGE SCALE GENOMIC DNA]</scope>
    <source>
        <strain>NIES-3377 / 10D</strain>
    </source>
</reference>
<proteinExistence type="inferred from homology"/>
<evidence type="ECO:0000250" key="1"/>
<evidence type="ECO:0000255" key="2">
    <source>
        <dbReference type="HAMAP-Rule" id="MF_00278"/>
    </source>
</evidence>
<geneLocation type="chloroplast"/>
<gene>
    <name evidence="2" type="primary">hisH</name>
</gene>
<organism>
    <name type="scientific">Cyanidioschyzon merolae (strain NIES-3377 / 10D)</name>
    <name type="common">Unicellular red alga</name>
    <dbReference type="NCBI Taxonomy" id="280699"/>
    <lineage>
        <taxon>Eukaryota</taxon>
        <taxon>Rhodophyta</taxon>
        <taxon>Bangiophyceae</taxon>
        <taxon>Cyanidiales</taxon>
        <taxon>Cyanidiaceae</taxon>
        <taxon>Cyanidioschyzon</taxon>
    </lineage>
</organism>
<name>HIS5_CYAM1</name>
<protein>
    <recommendedName>
        <fullName>Imidazole glycerol phosphate synthase subunit hisH</fullName>
        <ecNumber evidence="2">4.3.2.10</ecNumber>
    </recommendedName>
    <alternativeName>
        <fullName evidence="2">IGP synthase glutaminase subunit</fullName>
        <ecNumber evidence="2">3.5.1.2</ecNumber>
    </alternativeName>
    <alternativeName>
        <fullName>IGP synthase subunit hisH</fullName>
    </alternativeName>
    <alternativeName>
        <fullName>ImGP synthase subunit hisH</fullName>
        <shortName>IGPS subunit hisH</shortName>
    </alternativeName>
</protein>
<keyword id="KW-0028">Amino-acid biosynthesis</keyword>
<keyword id="KW-0150">Chloroplast</keyword>
<keyword id="KW-0315">Glutamine amidotransferase</keyword>
<keyword id="KW-0368">Histidine biosynthesis</keyword>
<keyword id="KW-0378">Hydrolase</keyword>
<keyword id="KW-0456">Lyase</keyword>
<keyword id="KW-0934">Plastid</keyword>
<keyword id="KW-1185">Reference proteome</keyword>
<dbReference type="EC" id="4.3.2.10" evidence="2"/>
<dbReference type="EC" id="3.5.1.2" evidence="2"/>
<dbReference type="EMBL" id="AB002583">
    <property type="protein sequence ID" value="BAC76209.1"/>
    <property type="molecule type" value="Genomic_DNA"/>
</dbReference>
<dbReference type="RefSeq" id="NP_849047.1">
    <property type="nucleotide sequence ID" value="NC_004799.1"/>
</dbReference>
<dbReference type="SMR" id="Q85FY4"/>
<dbReference type="STRING" id="280699.Q85FY4"/>
<dbReference type="EnsemblPlants" id="CMV138CT">
    <property type="protein sequence ID" value="CMV138CT"/>
    <property type="gene ID" value="CMV138C"/>
</dbReference>
<dbReference type="GeneID" id="844892"/>
<dbReference type="Gramene" id="CMV138CT">
    <property type="protein sequence ID" value="CMV138CT"/>
    <property type="gene ID" value="CMV138C"/>
</dbReference>
<dbReference type="KEGG" id="cme:CymeCp115"/>
<dbReference type="eggNOG" id="KOG0623">
    <property type="taxonomic scope" value="Eukaryota"/>
</dbReference>
<dbReference type="HOGENOM" id="CLU_071837_2_2_1"/>
<dbReference type="UniPathway" id="UPA00031">
    <property type="reaction ID" value="UER00010"/>
</dbReference>
<dbReference type="Proteomes" id="UP000007014">
    <property type="component" value="Chloroplast"/>
</dbReference>
<dbReference type="GO" id="GO:0009507">
    <property type="term" value="C:chloroplast"/>
    <property type="evidence" value="ECO:0007669"/>
    <property type="project" value="UniProtKB-SubCell"/>
</dbReference>
<dbReference type="GO" id="GO:0004359">
    <property type="term" value="F:glutaminase activity"/>
    <property type="evidence" value="ECO:0007669"/>
    <property type="project" value="UniProtKB-EC"/>
</dbReference>
<dbReference type="GO" id="GO:0000107">
    <property type="term" value="F:imidazoleglycerol-phosphate synthase activity"/>
    <property type="evidence" value="ECO:0007669"/>
    <property type="project" value="UniProtKB-UniRule"/>
</dbReference>
<dbReference type="GO" id="GO:0016829">
    <property type="term" value="F:lyase activity"/>
    <property type="evidence" value="ECO:0007669"/>
    <property type="project" value="UniProtKB-KW"/>
</dbReference>
<dbReference type="GO" id="GO:0000105">
    <property type="term" value="P:L-histidine biosynthetic process"/>
    <property type="evidence" value="ECO:0007669"/>
    <property type="project" value="UniProtKB-UniRule"/>
</dbReference>
<dbReference type="CDD" id="cd01748">
    <property type="entry name" value="GATase1_IGP_Synthase"/>
    <property type="match status" value="1"/>
</dbReference>
<dbReference type="Gene3D" id="3.40.50.880">
    <property type="match status" value="1"/>
</dbReference>
<dbReference type="HAMAP" id="MF_00278">
    <property type="entry name" value="HisH"/>
    <property type="match status" value="1"/>
</dbReference>
<dbReference type="InterPro" id="IPR029062">
    <property type="entry name" value="Class_I_gatase-like"/>
</dbReference>
<dbReference type="InterPro" id="IPR017926">
    <property type="entry name" value="GATASE"/>
</dbReference>
<dbReference type="InterPro" id="IPR010139">
    <property type="entry name" value="Imidazole-glycPsynth_HisH"/>
</dbReference>
<dbReference type="NCBIfam" id="TIGR01855">
    <property type="entry name" value="IMP_synth_hisH"/>
    <property type="match status" value="1"/>
</dbReference>
<dbReference type="PANTHER" id="PTHR42701">
    <property type="entry name" value="IMIDAZOLE GLYCEROL PHOSPHATE SYNTHASE SUBUNIT HISH"/>
    <property type="match status" value="1"/>
</dbReference>
<dbReference type="PANTHER" id="PTHR42701:SF1">
    <property type="entry name" value="IMIDAZOLE GLYCEROL PHOSPHATE SYNTHASE SUBUNIT HISH"/>
    <property type="match status" value="1"/>
</dbReference>
<dbReference type="Pfam" id="PF00117">
    <property type="entry name" value="GATase"/>
    <property type="match status" value="1"/>
</dbReference>
<dbReference type="PIRSF" id="PIRSF000495">
    <property type="entry name" value="Amidotransf_hisH"/>
    <property type="match status" value="1"/>
</dbReference>
<dbReference type="SUPFAM" id="SSF52317">
    <property type="entry name" value="Class I glutamine amidotransferase-like"/>
    <property type="match status" value="1"/>
</dbReference>
<dbReference type="PROSITE" id="PS51273">
    <property type="entry name" value="GATASE_TYPE_1"/>
    <property type="match status" value="1"/>
</dbReference>
<comment type="function">
    <text evidence="2">IGPS catalyzes the conversion of PRFAR and glutamine to IGP, AICAR and glutamate. The HisH subunit catalyzes the hydrolysis of glutamine to glutamate and ammonia as part of the synthesis of IGP and AICAR. The resulting ammonia molecule is channeled to the active site of HisF.</text>
</comment>
<comment type="catalytic activity">
    <reaction evidence="2">
        <text>5-[(5-phospho-1-deoxy-D-ribulos-1-ylimino)methylamino]-1-(5-phospho-beta-D-ribosyl)imidazole-4-carboxamide + L-glutamine = D-erythro-1-(imidazol-4-yl)glycerol 3-phosphate + 5-amino-1-(5-phospho-beta-D-ribosyl)imidazole-4-carboxamide + L-glutamate + H(+)</text>
        <dbReference type="Rhea" id="RHEA:24793"/>
        <dbReference type="ChEBI" id="CHEBI:15378"/>
        <dbReference type="ChEBI" id="CHEBI:29985"/>
        <dbReference type="ChEBI" id="CHEBI:58278"/>
        <dbReference type="ChEBI" id="CHEBI:58359"/>
        <dbReference type="ChEBI" id="CHEBI:58475"/>
        <dbReference type="ChEBI" id="CHEBI:58525"/>
        <dbReference type="EC" id="4.3.2.10"/>
    </reaction>
</comment>
<comment type="catalytic activity">
    <reaction evidence="2">
        <text>L-glutamine + H2O = L-glutamate + NH4(+)</text>
        <dbReference type="Rhea" id="RHEA:15889"/>
        <dbReference type="ChEBI" id="CHEBI:15377"/>
        <dbReference type="ChEBI" id="CHEBI:28938"/>
        <dbReference type="ChEBI" id="CHEBI:29985"/>
        <dbReference type="ChEBI" id="CHEBI:58359"/>
        <dbReference type="EC" id="3.5.1.2"/>
    </reaction>
</comment>
<comment type="pathway">
    <text evidence="2">Amino-acid biosynthesis; L-histidine biosynthesis; L-histidine from 5-phospho-alpha-D-ribose 1-diphosphate: step 5/9.</text>
</comment>
<comment type="subunit">
    <text evidence="1">Heterodimer of hisH and hisF.</text>
</comment>
<comment type="subcellular location">
    <subcellularLocation>
        <location>Plastid</location>
        <location>Chloroplast</location>
    </subcellularLocation>
</comment>
<sequence>MKVGLVDYSMGNMHSVSRAIQQANQQVCVVRSESELAQVHILVVPGVGHFDLAMKKLEQKGLRTGIAKWIAKGNPYIGICLGMHILFETSEEGKEEGLGVYKEQVKRLPVKVIPHMGWNRLECQNSECQNSEWVNWKAWPNAWAYFVHSYGVMASSQACATTTYEKIQMVAAIEKDNCFAMQFHPEKSGEFGLWLWREVMKKAASL</sequence>
<accession>Q85FY4</accession>